<reference key="1">
    <citation type="journal article" date="2003" name="Nature">
        <title>Genome sequence of Bacillus cereus and comparative analysis with Bacillus anthracis.</title>
        <authorList>
            <person name="Ivanova N."/>
            <person name="Sorokin A."/>
            <person name="Anderson I."/>
            <person name="Galleron N."/>
            <person name="Candelon B."/>
            <person name="Kapatral V."/>
            <person name="Bhattacharyya A."/>
            <person name="Reznik G."/>
            <person name="Mikhailova N."/>
            <person name="Lapidus A."/>
            <person name="Chu L."/>
            <person name="Mazur M."/>
            <person name="Goltsman E."/>
            <person name="Larsen N."/>
            <person name="D'Souza M."/>
            <person name="Walunas T."/>
            <person name="Grechkin Y."/>
            <person name="Pusch G."/>
            <person name="Haselkorn R."/>
            <person name="Fonstein M."/>
            <person name="Ehrlich S.D."/>
            <person name="Overbeek R."/>
            <person name="Kyrpides N.C."/>
        </authorList>
    </citation>
    <scope>NUCLEOTIDE SEQUENCE [LARGE SCALE GENOMIC DNA]</scope>
    <source>
        <strain>ATCC 14579 / DSM 31 / CCUG 7414 / JCM 2152 / NBRC 15305 / NCIMB 9373 / NCTC 2599 / NRRL B-3711</strain>
    </source>
</reference>
<organism>
    <name type="scientific">Bacillus cereus (strain ATCC 14579 / DSM 31 / CCUG 7414 / JCM 2152 / NBRC 15305 / NCIMB 9373 / NCTC 2599 / NRRL B-3711)</name>
    <dbReference type="NCBI Taxonomy" id="226900"/>
    <lineage>
        <taxon>Bacteria</taxon>
        <taxon>Bacillati</taxon>
        <taxon>Bacillota</taxon>
        <taxon>Bacilli</taxon>
        <taxon>Bacillales</taxon>
        <taxon>Bacillaceae</taxon>
        <taxon>Bacillus</taxon>
        <taxon>Bacillus cereus group</taxon>
    </lineage>
</organism>
<protein>
    <recommendedName>
        <fullName evidence="1">Aminomethyltransferase</fullName>
        <ecNumber evidence="1">2.1.2.10</ecNumber>
    </recommendedName>
    <alternativeName>
        <fullName evidence="1">Glycine cleavage system T protein</fullName>
    </alternativeName>
</protein>
<evidence type="ECO:0000255" key="1">
    <source>
        <dbReference type="HAMAP-Rule" id="MF_00259"/>
    </source>
</evidence>
<proteinExistence type="inferred from homology"/>
<comment type="function">
    <text evidence="1">The glycine cleavage system catalyzes the degradation of glycine.</text>
</comment>
<comment type="catalytic activity">
    <reaction evidence="1">
        <text>N(6)-[(R)-S(8)-aminomethyldihydrolipoyl]-L-lysyl-[protein] + (6S)-5,6,7,8-tetrahydrofolate = N(6)-[(R)-dihydrolipoyl]-L-lysyl-[protein] + (6R)-5,10-methylene-5,6,7,8-tetrahydrofolate + NH4(+)</text>
        <dbReference type="Rhea" id="RHEA:16945"/>
        <dbReference type="Rhea" id="RHEA-COMP:10475"/>
        <dbReference type="Rhea" id="RHEA-COMP:10492"/>
        <dbReference type="ChEBI" id="CHEBI:15636"/>
        <dbReference type="ChEBI" id="CHEBI:28938"/>
        <dbReference type="ChEBI" id="CHEBI:57453"/>
        <dbReference type="ChEBI" id="CHEBI:83100"/>
        <dbReference type="ChEBI" id="CHEBI:83143"/>
        <dbReference type="EC" id="2.1.2.10"/>
    </reaction>
</comment>
<comment type="subunit">
    <text evidence="1">The glycine cleavage system is composed of four proteins: P, T, L and H.</text>
</comment>
<comment type="similarity">
    <text evidence="1">Belongs to the GcvT family.</text>
</comment>
<gene>
    <name evidence="1" type="primary">gcvT</name>
    <name type="ordered locus">BC_4226</name>
</gene>
<accession>Q818M3</accession>
<feature type="chain" id="PRO_0000122537" description="Aminomethyltransferase">
    <location>
        <begin position="1"/>
        <end position="366"/>
    </location>
</feature>
<sequence length="366" mass="40225">MITLQRTPLFDVYAKYGGKTIDFGGWELPVQFSSIKEEHEAVRTAAGLFDVSHMGEVEVKGVDSLAFLQRVVTNDVSTLKVGGAQYTAMCYENGGTVDDLLIYKRGEEDYLLVINASNIEKDYEWLASHVIGDATVVNVSSEVAQLAIQGPKAEGILQKVVSEDLKEIKFFKFKNDILVDGIPALVSRTGYTGEDGFEIYCKSEDAAKLWEKLLEVGAEEGLKACGLGARDTLRFEATLPLYGQELSKDITPIEAGIGFAVKTNKEADFFGKATLKEQKENGAPRKLVGIEVIERGIPRTHYPVFIGEEKIGEVTSGTQSPTLKKSIGLALIDVKYAAVDTEVEIEIRNKRVKAVVVPTPFYKRSK</sequence>
<name>GCST_BACCR</name>
<keyword id="KW-0032">Aminotransferase</keyword>
<keyword id="KW-1185">Reference proteome</keyword>
<keyword id="KW-0808">Transferase</keyword>
<dbReference type="EC" id="2.1.2.10" evidence="1"/>
<dbReference type="EMBL" id="AE016877">
    <property type="protein sequence ID" value="AAP11141.1"/>
    <property type="molecule type" value="Genomic_DNA"/>
</dbReference>
<dbReference type="RefSeq" id="NP_833940.1">
    <property type="nucleotide sequence ID" value="NC_004722.1"/>
</dbReference>
<dbReference type="RefSeq" id="WP_000631769.1">
    <property type="nucleotide sequence ID" value="NZ_CP138336.1"/>
</dbReference>
<dbReference type="SMR" id="Q818M3"/>
<dbReference type="STRING" id="226900.BC_4226"/>
<dbReference type="GeneID" id="72450912"/>
<dbReference type="KEGG" id="bce:BC4226"/>
<dbReference type="PATRIC" id="fig|226900.8.peg.4367"/>
<dbReference type="HOGENOM" id="CLU_007884_10_2_9"/>
<dbReference type="OrthoDB" id="9774591at2"/>
<dbReference type="Proteomes" id="UP000001417">
    <property type="component" value="Chromosome"/>
</dbReference>
<dbReference type="GO" id="GO:0005829">
    <property type="term" value="C:cytosol"/>
    <property type="evidence" value="ECO:0000318"/>
    <property type="project" value="GO_Central"/>
</dbReference>
<dbReference type="GO" id="GO:0005960">
    <property type="term" value="C:glycine cleavage complex"/>
    <property type="evidence" value="ECO:0007669"/>
    <property type="project" value="InterPro"/>
</dbReference>
<dbReference type="GO" id="GO:0004047">
    <property type="term" value="F:aminomethyltransferase activity"/>
    <property type="evidence" value="ECO:0007669"/>
    <property type="project" value="UniProtKB-UniRule"/>
</dbReference>
<dbReference type="GO" id="GO:0008483">
    <property type="term" value="F:transaminase activity"/>
    <property type="evidence" value="ECO:0007669"/>
    <property type="project" value="UniProtKB-KW"/>
</dbReference>
<dbReference type="GO" id="GO:0019464">
    <property type="term" value="P:glycine decarboxylation via glycine cleavage system"/>
    <property type="evidence" value="ECO:0007669"/>
    <property type="project" value="UniProtKB-UniRule"/>
</dbReference>
<dbReference type="FunFam" id="2.40.30.110:FF:000003">
    <property type="entry name" value="Aminomethyltransferase"/>
    <property type="match status" value="1"/>
</dbReference>
<dbReference type="FunFam" id="3.30.70.1400:FF:000001">
    <property type="entry name" value="Aminomethyltransferase"/>
    <property type="match status" value="1"/>
</dbReference>
<dbReference type="FunFam" id="4.10.1250.10:FF:000001">
    <property type="entry name" value="Aminomethyltransferase"/>
    <property type="match status" value="1"/>
</dbReference>
<dbReference type="Gene3D" id="2.40.30.110">
    <property type="entry name" value="Aminomethyltransferase beta-barrel domains"/>
    <property type="match status" value="1"/>
</dbReference>
<dbReference type="Gene3D" id="3.30.70.1400">
    <property type="entry name" value="Aminomethyltransferase beta-barrel domains"/>
    <property type="match status" value="1"/>
</dbReference>
<dbReference type="Gene3D" id="4.10.1250.10">
    <property type="entry name" value="Aminomethyltransferase fragment"/>
    <property type="match status" value="1"/>
</dbReference>
<dbReference type="Gene3D" id="3.30.1360.120">
    <property type="entry name" value="Probable tRNA modification gtpase trme, domain 1"/>
    <property type="match status" value="1"/>
</dbReference>
<dbReference type="HAMAP" id="MF_00259">
    <property type="entry name" value="GcvT"/>
    <property type="match status" value="1"/>
</dbReference>
<dbReference type="InterPro" id="IPR006223">
    <property type="entry name" value="GCS_T"/>
</dbReference>
<dbReference type="InterPro" id="IPR022903">
    <property type="entry name" value="GCS_T_bac"/>
</dbReference>
<dbReference type="InterPro" id="IPR013977">
    <property type="entry name" value="GCST_C"/>
</dbReference>
<dbReference type="InterPro" id="IPR006222">
    <property type="entry name" value="GCV_T_N"/>
</dbReference>
<dbReference type="InterPro" id="IPR028896">
    <property type="entry name" value="GcvT/YgfZ/DmdA"/>
</dbReference>
<dbReference type="InterPro" id="IPR029043">
    <property type="entry name" value="GcvT/YgfZ_C"/>
</dbReference>
<dbReference type="InterPro" id="IPR027266">
    <property type="entry name" value="TrmE/GcvT_dom1"/>
</dbReference>
<dbReference type="NCBIfam" id="TIGR00528">
    <property type="entry name" value="gcvT"/>
    <property type="match status" value="1"/>
</dbReference>
<dbReference type="NCBIfam" id="NF001567">
    <property type="entry name" value="PRK00389.1"/>
    <property type="match status" value="1"/>
</dbReference>
<dbReference type="PANTHER" id="PTHR43757">
    <property type="entry name" value="AMINOMETHYLTRANSFERASE"/>
    <property type="match status" value="1"/>
</dbReference>
<dbReference type="PANTHER" id="PTHR43757:SF2">
    <property type="entry name" value="AMINOMETHYLTRANSFERASE, MITOCHONDRIAL"/>
    <property type="match status" value="1"/>
</dbReference>
<dbReference type="Pfam" id="PF01571">
    <property type="entry name" value="GCV_T"/>
    <property type="match status" value="1"/>
</dbReference>
<dbReference type="Pfam" id="PF08669">
    <property type="entry name" value="GCV_T_C"/>
    <property type="match status" value="1"/>
</dbReference>
<dbReference type="PIRSF" id="PIRSF006487">
    <property type="entry name" value="GcvT"/>
    <property type="match status" value="1"/>
</dbReference>
<dbReference type="SUPFAM" id="SSF101790">
    <property type="entry name" value="Aminomethyltransferase beta-barrel domain"/>
    <property type="match status" value="1"/>
</dbReference>
<dbReference type="SUPFAM" id="SSF103025">
    <property type="entry name" value="Folate-binding domain"/>
    <property type="match status" value="1"/>
</dbReference>